<protein>
    <recommendedName>
        <fullName>Protein transport protein SEC22</fullName>
    </recommendedName>
</protein>
<reference key="1">
    <citation type="journal article" date="2004" name="Nature">
        <title>Genome evolution in yeasts.</title>
        <authorList>
            <person name="Dujon B."/>
            <person name="Sherman D."/>
            <person name="Fischer G."/>
            <person name="Durrens P."/>
            <person name="Casaregola S."/>
            <person name="Lafontaine I."/>
            <person name="de Montigny J."/>
            <person name="Marck C."/>
            <person name="Neuveglise C."/>
            <person name="Talla E."/>
            <person name="Goffard N."/>
            <person name="Frangeul L."/>
            <person name="Aigle M."/>
            <person name="Anthouard V."/>
            <person name="Babour A."/>
            <person name="Barbe V."/>
            <person name="Barnay S."/>
            <person name="Blanchin S."/>
            <person name="Beckerich J.-M."/>
            <person name="Beyne E."/>
            <person name="Bleykasten C."/>
            <person name="Boisrame A."/>
            <person name="Boyer J."/>
            <person name="Cattolico L."/>
            <person name="Confanioleri F."/>
            <person name="de Daruvar A."/>
            <person name="Despons L."/>
            <person name="Fabre E."/>
            <person name="Fairhead C."/>
            <person name="Ferry-Dumazet H."/>
            <person name="Groppi A."/>
            <person name="Hantraye F."/>
            <person name="Hennequin C."/>
            <person name="Jauniaux N."/>
            <person name="Joyet P."/>
            <person name="Kachouri R."/>
            <person name="Kerrest A."/>
            <person name="Koszul R."/>
            <person name="Lemaire M."/>
            <person name="Lesur I."/>
            <person name="Ma L."/>
            <person name="Muller H."/>
            <person name="Nicaud J.-M."/>
            <person name="Nikolski M."/>
            <person name="Oztas S."/>
            <person name="Ozier-Kalogeropoulos O."/>
            <person name="Pellenz S."/>
            <person name="Potier S."/>
            <person name="Richard G.-F."/>
            <person name="Straub M.-L."/>
            <person name="Suleau A."/>
            <person name="Swennen D."/>
            <person name="Tekaia F."/>
            <person name="Wesolowski-Louvel M."/>
            <person name="Westhof E."/>
            <person name="Wirth B."/>
            <person name="Zeniou-Meyer M."/>
            <person name="Zivanovic Y."/>
            <person name="Bolotin-Fukuhara M."/>
            <person name="Thierry A."/>
            <person name="Bouchier C."/>
            <person name="Caudron B."/>
            <person name="Scarpelli C."/>
            <person name="Gaillardin C."/>
            <person name="Weissenbach J."/>
            <person name="Wincker P."/>
            <person name="Souciet J.-L."/>
        </authorList>
    </citation>
    <scope>NUCLEOTIDE SEQUENCE [LARGE SCALE GENOMIC DNA]</scope>
    <source>
        <strain>ATCC 8585 / CBS 2359 / DSM 70799 / NBRC 1267 / NRRL Y-1140 / WM37</strain>
    </source>
</reference>
<comment type="function">
    <text evidence="1">Required for transport from the ER to the Golgi complex.</text>
</comment>
<comment type="subcellular location">
    <subcellularLocation>
        <location evidence="5">Membrane</location>
        <topology evidence="5">Single-pass type IV membrane protein</topology>
    </subcellularLocation>
    <subcellularLocation>
        <location evidence="5">Endoplasmic reticulum membrane</location>
        <topology evidence="5">Single-pass type IV membrane protein</topology>
    </subcellularLocation>
    <subcellularLocation>
        <location evidence="5">Golgi apparatus membrane</location>
        <topology evidence="5">Single-pass type IV membrane protein</topology>
    </subcellularLocation>
</comment>
<comment type="similarity">
    <text evidence="5">Belongs to the synaptobrevin family.</text>
</comment>
<name>SEC22_KLULA</name>
<feature type="chain" id="PRO_0000206766" description="Protein transport protein SEC22">
    <location>
        <begin position="1"/>
        <end position="214"/>
    </location>
</feature>
<feature type="topological domain" description="Cytoplasmic" evidence="2">
    <location>
        <begin position="1"/>
        <end position="192"/>
    </location>
</feature>
<feature type="transmembrane region" description="Helical; Anchor for type IV membrane protein" evidence="2">
    <location>
        <begin position="193"/>
        <end position="213"/>
    </location>
</feature>
<feature type="topological domain" description="Vesicular" evidence="2">
    <location>
        <position position="214"/>
    </location>
</feature>
<feature type="domain" description="Longin" evidence="3">
    <location>
        <begin position="6"/>
        <end position="117"/>
    </location>
</feature>
<feature type="domain" description="v-SNARE coiled-coil homology" evidence="4">
    <location>
        <begin position="132"/>
        <end position="192"/>
    </location>
</feature>
<sequence length="214" mass="24899">MIRSTLIFREDGLPLCASVDDDTDPSLQEQKKKVKILISRFTPTSANEATVESGDFEIHYIRLNTVVYIVVAERNYPRNLAFSYLADIQQEFEHSYGGQLSKSNVRPYEFVSFDNFLQKTKKVYNDKRVQGNMDQLNQDLKGVKQIMTKNIEDLLYRGDSLDKMSDMSASLRQDAKKYRASAQKINFDLLISQYAPIAIIAFFFVFLLWWMFLR</sequence>
<accession>Q6CJA0</accession>
<dbReference type="EMBL" id="CR382126">
    <property type="protein sequence ID" value="CAG98697.1"/>
    <property type="molecule type" value="Genomic_DNA"/>
</dbReference>
<dbReference type="RefSeq" id="XP_455989.1">
    <property type="nucleotide sequence ID" value="XM_455989.1"/>
</dbReference>
<dbReference type="SMR" id="Q6CJA0"/>
<dbReference type="FunCoup" id="Q6CJA0">
    <property type="interactions" value="1089"/>
</dbReference>
<dbReference type="STRING" id="284590.Q6CJA0"/>
<dbReference type="PaxDb" id="284590-Q6CJA0"/>
<dbReference type="KEGG" id="kla:KLLA0_F20251g"/>
<dbReference type="eggNOG" id="KOG0862">
    <property type="taxonomic scope" value="Eukaryota"/>
</dbReference>
<dbReference type="HOGENOM" id="CLU_054453_4_0_1"/>
<dbReference type="InParanoid" id="Q6CJA0"/>
<dbReference type="OMA" id="FIYWRFF"/>
<dbReference type="Proteomes" id="UP000000598">
    <property type="component" value="Chromosome F"/>
</dbReference>
<dbReference type="GO" id="GO:0005789">
    <property type="term" value="C:endoplasmic reticulum membrane"/>
    <property type="evidence" value="ECO:0007669"/>
    <property type="project" value="UniProtKB-SubCell"/>
</dbReference>
<dbReference type="GO" id="GO:0000139">
    <property type="term" value="C:Golgi membrane"/>
    <property type="evidence" value="ECO:0007669"/>
    <property type="project" value="UniProtKB-SubCell"/>
</dbReference>
<dbReference type="GO" id="GO:0005484">
    <property type="term" value="F:SNAP receptor activity"/>
    <property type="evidence" value="ECO:0007669"/>
    <property type="project" value="InterPro"/>
</dbReference>
<dbReference type="GO" id="GO:0006888">
    <property type="term" value="P:endoplasmic reticulum to Golgi vesicle-mediated transport"/>
    <property type="evidence" value="ECO:0007669"/>
    <property type="project" value="InterPro"/>
</dbReference>
<dbReference type="GO" id="GO:0015031">
    <property type="term" value="P:protein transport"/>
    <property type="evidence" value="ECO:0007669"/>
    <property type="project" value="UniProtKB-KW"/>
</dbReference>
<dbReference type="GO" id="GO:0006890">
    <property type="term" value="P:retrograde vesicle-mediated transport, Golgi to endoplasmic reticulum"/>
    <property type="evidence" value="ECO:0007669"/>
    <property type="project" value="InterPro"/>
</dbReference>
<dbReference type="CDD" id="cd14824">
    <property type="entry name" value="Longin"/>
    <property type="match status" value="1"/>
</dbReference>
<dbReference type="CDD" id="cd15866">
    <property type="entry name" value="R-SNARE_SEC22"/>
    <property type="match status" value="1"/>
</dbReference>
<dbReference type="FunFam" id="1.20.5.110:FF:000065">
    <property type="entry name" value="SEC22 (YLR268W)"/>
    <property type="match status" value="1"/>
</dbReference>
<dbReference type="FunFam" id="3.30.450.50:FF:000007">
    <property type="entry name" value="SNARE complex subunit SEC22"/>
    <property type="match status" value="1"/>
</dbReference>
<dbReference type="Gene3D" id="1.20.5.110">
    <property type="match status" value="1"/>
</dbReference>
<dbReference type="Gene3D" id="3.30.450.50">
    <property type="entry name" value="Longin domain"/>
    <property type="match status" value="1"/>
</dbReference>
<dbReference type="InterPro" id="IPR011012">
    <property type="entry name" value="Longin-like_dom_sf"/>
</dbReference>
<dbReference type="InterPro" id="IPR010908">
    <property type="entry name" value="Longin_dom"/>
</dbReference>
<dbReference type="InterPro" id="IPR044565">
    <property type="entry name" value="Sec22"/>
</dbReference>
<dbReference type="InterPro" id="IPR042855">
    <property type="entry name" value="V_SNARE_CC"/>
</dbReference>
<dbReference type="PANTHER" id="PTHR45837">
    <property type="entry name" value="VESICLE-TRAFFICKING PROTEIN SEC22B"/>
    <property type="match status" value="1"/>
</dbReference>
<dbReference type="Pfam" id="PF13774">
    <property type="entry name" value="Longin"/>
    <property type="match status" value="1"/>
</dbReference>
<dbReference type="Pfam" id="PF00957">
    <property type="entry name" value="Synaptobrevin"/>
    <property type="match status" value="1"/>
</dbReference>
<dbReference type="SMART" id="SM01270">
    <property type="entry name" value="Longin"/>
    <property type="match status" value="1"/>
</dbReference>
<dbReference type="SUPFAM" id="SSF58038">
    <property type="entry name" value="SNARE fusion complex"/>
    <property type="match status" value="1"/>
</dbReference>
<dbReference type="SUPFAM" id="SSF64356">
    <property type="entry name" value="SNARE-like"/>
    <property type="match status" value="1"/>
</dbReference>
<dbReference type="PROSITE" id="PS50859">
    <property type="entry name" value="LONGIN"/>
    <property type="match status" value="1"/>
</dbReference>
<dbReference type="PROSITE" id="PS50892">
    <property type="entry name" value="V_SNARE"/>
    <property type="match status" value="1"/>
</dbReference>
<organism>
    <name type="scientific">Kluyveromyces lactis (strain ATCC 8585 / CBS 2359 / DSM 70799 / NBRC 1267 / NRRL Y-1140 / WM37)</name>
    <name type="common">Yeast</name>
    <name type="synonym">Candida sphaerica</name>
    <dbReference type="NCBI Taxonomy" id="284590"/>
    <lineage>
        <taxon>Eukaryota</taxon>
        <taxon>Fungi</taxon>
        <taxon>Dikarya</taxon>
        <taxon>Ascomycota</taxon>
        <taxon>Saccharomycotina</taxon>
        <taxon>Saccharomycetes</taxon>
        <taxon>Saccharomycetales</taxon>
        <taxon>Saccharomycetaceae</taxon>
        <taxon>Kluyveromyces</taxon>
    </lineage>
</organism>
<gene>
    <name type="primary">SEC22</name>
    <name type="ordered locus">KLLA0F20251g</name>
</gene>
<keyword id="KW-0175">Coiled coil</keyword>
<keyword id="KW-0256">Endoplasmic reticulum</keyword>
<keyword id="KW-0931">ER-Golgi transport</keyword>
<keyword id="KW-0333">Golgi apparatus</keyword>
<keyword id="KW-0472">Membrane</keyword>
<keyword id="KW-0653">Protein transport</keyword>
<keyword id="KW-1185">Reference proteome</keyword>
<keyword id="KW-0812">Transmembrane</keyword>
<keyword id="KW-1133">Transmembrane helix</keyword>
<keyword id="KW-0813">Transport</keyword>
<proteinExistence type="inferred from homology"/>
<evidence type="ECO:0000250" key="1"/>
<evidence type="ECO:0000255" key="2"/>
<evidence type="ECO:0000255" key="3">
    <source>
        <dbReference type="PROSITE-ProRule" id="PRU00231"/>
    </source>
</evidence>
<evidence type="ECO:0000255" key="4">
    <source>
        <dbReference type="PROSITE-ProRule" id="PRU00290"/>
    </source>
</evidence>
<evidence type="ECO:0000305" key="5"/>